<name>GGGPS_CENSY</name>
<comment type="function">
    <text evidence="1">Prenyltransferase that catalyzes the transfer of the geranylgeranyl moiety of geranylgeranyl diphosphate (GGPP) to the C3 hydroxyl of sn-glycerol-1-phosphate (G1P). This reaction is the first ether-bond-formation step in the biosynthesis of archaeal membrane lipids.</text>
</comment>
<comment type="catalytic activity">
    <reaction evidence="1">
        <text>sn-glycerol 1-phosphate + (2E,6E,10E)-geranylgeranyl diphosphate = sn-3-O-(geranylgeranyl)glycerol 1-phosphate + diphosphate</text>
        <dbReference type="Rhea" id="RHEA:23404"/>
        <dbReference type="ChEBI" id="CHEBI:33019"/>
        <dbReference type="ChEBI" id="CHEBI:57677"/>
        <dbReference type="ChEBI" id="CHEBI:57685"/>
        <dbReference type="ChEBI" id="CHEBI:58756"/>
        <dbReference type="EC" id="2.5.1.41"/>
    </reaction>
</comment>
<comment type="cofactor">
    <cofactor evidence="1">
        <name>Mg(2+)</name>
        <dbReference type="ChEBI" id="CHEBI:18420"/>
    </cofactor>
</comment>
<comment type="pathway">
    <text evidence="1">Membrane lipid metabolism; glycerophospholipid metabolism.</text>
</comment>
<comment type="subcellular location">
    <subcellularLocation>
        <location evidence="1">Cytoplasm</location>
    </subcellularLocation>
</comment>
<comment type="similarity">
    <text evidence="1">Belongs to the GGGP/HepGP synthase family. Group II subfamily.</text>
</comment>
<comment type="sequence caution" evidence="2">
    <conflict type="erroneous initiation">
        <sequence resource="EMBL-CDS" id="ABK78438"/>
    </conflict>
</comment>
<feature type="chain" id="PRO_0000350673" description="Geranylgeranylglyceryl phosphate synthase">
    <location>
        <begin position="1"/>
        <end position="247"/>
    </location>
</feature>
<feature type="binding site" evidence="1">
    <location>
        <position position="24"/>
    </location>
    <ligand>
        <name>Mg(2+)</name>
        <dbReference type="ChEBI" id="CHEBI:18420"/>
    </ligand>
</feature>
<feature type="binding site" evidence="1">
    <location>
        <position position="53"/>
    </location>
    <ligand>
        <name>Mg(2+)</name>
        <dbReference type="ChEBI" id="CHEBI:18420"/>
    </ligand>
</feature>
<feature type="binding site" evidence="1">
    <location>
        <begin position="172"/>
        <end position="178"/>
    </location>
    <ligand>
        <name>sn-glycerol 1-phosphate</name>
        <dbReference type="ChEBI" id="CHEBI:57685"/>
    </ligand>
</feature>
<feature type="binding site" evidence="1">
    <location>
        <begin position="203"/>
        <end position="204"/>
    </location>
    <ligand>
        <name>sn-glycerol 1-phosphate</name>
        <dbReference type="ChEBI" id="CHEBI:57685"/>
    </ligand>
</feature>
<feature type="binding site" evidence="1">
    <location>
        <begin position="225"/>
        <end position="226"/>
    </location>
    <ligand>
        <name>sn-glycerol 1-phosphate</name>
        <dbReference type="ChEBI" id="CHEBI:57685"/>
    </ligand>
</feature>
<reference key="1">
    <citation type="journal article" date="2006" name="Proc. Natl. Acad. Sci. U.S.A.">
        <title>Genomic analysis of the uncultivated marine crenarchaeote Cenarchaeum symbiosum.</title>
        <authorList>
            <person name="Hallam S.J."/>
            <person name="Konstantinidis K.T."/>
            <person name="Putnam N."/>
            <person name="Schleper C."/>
            <person name="Watanabe Y."/>
            <person name="Sugahara J."/>
            <person name="Preston C."/>
            <person name="de la Torre J."/>
            <person name="Richardson P.M."/>
            <person name="DeLong E.F."/>
        </authorList>
    </citation>
    <scope>NUCLEOTIDE SEQUENCE [LARGE SCALE GENOMIC DNA]</scope>
    <source>
        <strain>A</strain>
    </source>
</reference>
<accession>A0RYM1</accession>
<gene>
    <name type="ordered locus">CENSYa_1828</name>
</gene>
<sequence>MGAVEARLRSELKKRKTLLFALIDSEVSDTKSAQDLARGAEKAGASAILVGGSSTGDQAETSRIVGDIKEATTIPVILFPGNVTGVAPGADAILFSSLMNSENPYFITQAQALGAPSVLKFGLEALPTAYLVIGEGTSVWFVGAARGIPLGKPRIAAAYSLAARFLGMRFVYLEAGSGAESPVKPEMIRAVREAFDGFLIVGGGIRDEEAARRASEAGADAIVIGTMLEGGGSLDKLSRIAGAIGGT</sequence>
<proteinExistence type="inferred from homology"/>
<protein>
    <recommendedName>
        <fullName evidence="1">Geranylgeranylglyceryl phosphate synthase</fullName>
        <shortName evidence="1">GGGP synthase</shortName>
        <shortName evidence="1">GGGPS</shortName>
        <ecNumber evidence="1">2.5.1.41</ecNumber>
    </recommendedName>
    <alternativeName>
        <fullName evidence="1">(S)-3-O-geranylgeranylglyceryl phosphate synthase</fullName>
    </alternativeName>
    <alternativeName>
        <fullName evidence="1">Phosphoglycerol geranylgeranyltransferase</fullName>
    </alternativeName>
</protein>
<evidence type="ECO:0000255" key="1">
    <source>
        <dbReference type="HAMAP-Rule" id="MF_00112"/>
    </source>
</evidence>
<evidence type="ECO:0000305" key="2"/>
<dbReference type="EC" id="2.5.1.41" evidence="1"/>
<dbReference type="EMBL" id="DP000238">
    <property type="protein sequence ID" value="ABK78438.1"/>
    <property type="status" value="ALT_INIT"/>
    <property type="molecule type" value="Genomic_DNA"/>
</dbReference>
<dbReference type="SMR" id="A0RYM1"/>
<dbReference type="STRING" id="414004.CENSYa_1828"/>
<dbReference type="EnsemblBacteria" id="ABK78438">
    <property type="protein sequence ID" value="ABK78438"/>
    <property type="gene ID" value="CENSYa_1828"/>
</dbReference>
<dbReference type="KEGG" id="csy:CENSYa_1828"/>
<dbReference type="PATRIC" id="fig|414004.10.peg.1670"/>
<dbReference type="HOGENOM" id="CLU_068610_0_0_2"/>
<dbReference type="UniPathway" id="UPA00940"/>
<dbReference type="Proteomes" id="UP000000758">
    <property type="component" value="Chromosome"/>
</dbReference>
<dbReference type="GO" id="GO:0005737">
    <property type="term" value="C:cytoplasm"/>
    <property type="evidence" value="ECO:0007669"/>
    <property type="project" value="UniProtKB-SubCell"/>
</dbReference>
<dbReference type="GO" id="GO:0000107">
    <property type="term" value="F:imidazoleglycerol-phosphate synthase activity"/>
    <property type="evidence" value="ECO:0007669"/>
    <property type="project" value="TreeGrafter"/>
</dbReference>
<dbReference type="GO" id="GO:0000287">
    <property type="term" value="F:magnesium ion binding"/>
    <property type="evidence" value="ECO:0007669"/>
    <property type="project" value="UniProtKB-UniRule"/>
</dbReference>
<dbReference type="GO" id="GO:0047294">
    <property type="term" value="F:phosphoglycerol geranylgeranyltransferase activity"/>
    <property type="evidence" value="ECO:0007669"/>
    <property type="project" value="UniProtKB-UniRule"/>
</dbReference>
<dbReference type="GO" id="GO:0046474">
    <property type="term" value="P:glycerophospholipid biosynthetic process"/>
    <property type="evidence" value="ECO:0007669"/>
    <property type="project" value="UniProtKB-UniRule"/>
</dbReference>
<dbReference type="CDD" id="cd02812">
    <property type="entry name" value="PcrB_like"/>
    <property type="match status" value="1"/>
</dbReference>
<dbReference type="FunFam" id="3.20.20.390:FF:000001">
    <property type="entry name" value="Heptaprenylglyceryl phosphate synthase"/>
    <property type="match status" value="1"/>
</dbReference>
<dbReference type="Gene3D" id="3.20.20.390">
    <property type="entry name" value="FMN-linked oxidoreductases"/>
    <property type="match status" value="1"/>
</dbReference>
<dbReference type="HAMAP" id="MF_00112">
    <property type="entry name" value="GGGP_HepGP_synthase"/>
    <property type="match status" value="1"/>
</dbReference>
<dbReference type="InterPro" id="IPR038597">
    <property type="entry name" value="GGGP/HepGP_synthase_sf"/>
</dbReference>
<dbReference type="InterPro" id="IPR008205">
    <property type="entry name" value="GGGP_HepGP_synthase"/>
</dbReference>
<dbReference type="InterPro" id="IPR010946">
    <property type="entry name" value="GGGP_synth"/>
</dbReference>
<dbReference type="InterPro" id="IPR050064">
    <property type="entry name" value="IGPS_HisA/HisF"/>
</dbReference>
<dbReference type="NCBIfam" id="TIGR01769">
    <property type="entry name" value="GGGP"/>
    <property type="match status" value="1"/>
</dbReference>
<dbReference type="NCBIfam" id="TIGR01768">
    <property type="entry name" value="GGGP-family"/>
    <property type="match status" value="1"/>
</dbReference>
<dbReference type="NCBIfam" id="NF003198">
    <property type="entry name" value="PRK04169.1-2"/>
    <property type="match status" value="1"/>
</dbReference>
<dbReference type="PANTHER" id="PTHR21235:SF22">
    <property type="entry name" value="GERANYLGERANYLGLYCERYL PHOSPHATE SYNTHASE"/>
    <property type="match status" value="1"/>
</dbReference>
<dbReference type="PANTHER" id="PTHR21235">
    <property type="entry name" value="IMIDAZOLE GLYCEROL PHOSPHATE SYNTHASE SUBUNIT HISF/H IGP SYNTHASE SUBUNIT HISF/H"/>
    <property type="match status" value="1"/>
</dbReference>
<dbReference type="Pfam" id="PF01884">
    <property type="entry name" value="PcrB"/>
    <property type="match status" value="1"/>
</dbReference>
<dbReference type="SUPFAM" id="SSF51395">
    <property type="entry name" value="FMN-linked oxidoreductases"/>
    <property type="match status" value="1"/>
</dbReference>
<organism>
    <name type="scientific">Cenarchaeum symbiosum (strain A)</name>
    <dbReference type="NCBI Taxonomy" id="414004"/>
    <lineage>
        <taxon>Archaea</taxon>
        <taxon>Nitrososphaerota</taxon>
        <taxon>Candidatus Cenarchaeales</taxon>
        <taxon>Candidatus Cenarchaeaceae</taxon>
        <taxon>Candidatus Cenarchaeum</taxon>
    </lineage>
</organism>
<keyword id="KW-0963">Cytoplasm</keyword>
<keyword id="KW-0444">Lipid biosynthesis</keyword>
<keyword id="KW-0443">Lipid metabolism</keyword>
<keyword id="KW-0460">Magnesium</keyword>
<keyword id="KW-0479">Metal-binding</keyword>
<keyword id="KW-0594">Phospholipid biosynthesis</keyword>
<keyword id="KW-1208">Phospholipid metabolism</keyword>
<keyword id="KW-1185">Reference proteome</keyword>
<keyword id="KW-0808">Transferase</keyword>